<sequence length="400" mass="43389">MIIKPRVRGFICVTTHPVGCEANVKEQIDYVTSHGPIANGPKKVLVIGASTGYGLAARISAAFGSGADTLGVFFERAGSDTKPGTAGWYNSAAFEKFAAEKGLYARSINGDAFSDKVKQITIDTIKQDLGKVDLVVYSLAAPRRTHPKTGETISSTLKPVGKSVTFRGLDTDKETIREVTLEPATQEEIDGTVAVMGGEDWQMWIDALADAGVLADGAKTTAFTYLGEQITHDIYWNGSIGEAKKDLDKKVVSIREKLAVHGGDARVSVLKAVVTQASSAIPMMPLYLSLLFKVMKEKGTHEGCIEQVYGLLKDSMYGATPHIDEEGRLRADYKELDPQVQAQVVAMWDKVTNDNLYEMTDFAGYKTEFLRLFGFEIAGVDYDADVNPDVKIPGIIDTTA</sequence>
<evidence type="ECO:0000255" key="1">
    <source>
        <dbReference type="HAMAP-Rule" id="MF_01838"/>
    </source>
</evidence>
<accession>A4JK23</accession>
<protein>
    <recommendedName>
        <fullName evidence="1">Enoyl-[acyl-carrier-protein] reductase [NADH]</fullName>
        <shortName evidence="1">ENR</shortName>
        <ecNumber evidence="1">1.3.1.9</ecNumber>
    </recommendedName>
</protein>
<dbReference type="EC" id="1.3.1.9" evidence="1"/>
<dbReference type="EMBL" id="CP000615">
    <property type="protein sequence ID" value="ABO56626.1"/>
    <property type="molecule type" value="Genomic_DNA"/>
</dbReference>
<dbReference type="SMR" id="A4JK23"/>
<dbReference type="KEGG" id="bvi:Bcep1808_3641"/>
<dbReference type="eggNOG" id="COG3007">
    <property type="taxonomic scope" value="Bacteria"/>
</dbReference>
<dbReference type="HOGENOM" id="CLU_057698_1_0_4"/>
<dbReference type="UniPathway" id="UPA00094"/>
<dbReference type="Proteomes" id="UP000002287">
    <property type="component" value="Chromosome 2"/>
</dbReference>
<dbReference type="GO" id="GO:0004318">
    <property type="term" value="F:enoyl-[acyl-carrier-protein] reductase (NADH) activity"/>
    <property type="evidence" value="ECO:0007669"/>
    <property type="project" value="UniProtKB-UniRule"/>
</dbReference>
<dbReference type="GO" id="GO:0051287">
    <property type="term" value="F:NAD binding"/>
    <property type="evidence" value="ECO:0007669"/>
    <property type="project" value="UniProtKB-UniRule"/>
</dbReference>
<dbReference type="GO" id="GO:0050343">
    <property type="term" value="F:trans-2-enoyl-CoA reductase (NADH) activity"/>
    <property type="evidence" value="ECO:0007669"/>
    <property type="project" value="TreeGrafter"/>
</dbReference>
<dbReference type="GO" id="GO:0006633">
    <property type="term" value="P:fatty acid biosynthetic process"/>
    <property type="evidence" value="ECO:0007669"/>
    <property type="project" value="UniProtKB-UniRule"/>
</dbReference>
<dbReference type="FunFam" id="3.40.50.720:FF:000221">
    <property type="entry name" value="Enoyl-[acyl-carrier-protein] reductase [NADH]"/>
    <property type="match status" value="1"/>
</dbReference>
<dbReference type="Gene3D" id="3.40.50.720">
    <property type="entry name" value="NAD(P)-binding Rossmann-like Domain"/>
    <property type="match status" value="1"/>
</dbReference>
<dbReference type="HAMAP" id="MF_01838">
    <property type="entry name" value="FabV_reductase"/>
    <property type="match status" value="1"/>
</dbReference>
<dbReference type="InterPro" id="IPR024906">
    <property type="entry name" value="Eno_Rdtase_FAD-bd_dom"/>
</dbReference>
<dbReference type="InterPro" id="IPR024910">
    <property type="entry name" value="Enoyl-CoA_Rdtase_cat_dom"/>
</dbReference>
<dbReference type="InterPro" id="IPR050048">
    <property type="entry name" value="FabV-like_NADH_b"/>
</dbReference>
<dbReference type="InterPro" id="IPR010758">
    <property type="entry name" value="Trans-2-enoyl-CoA_reductase"/>
</dbReference>
<dbReference type="NCBIfam" id="NF043048">
    <property type="entry name" value="EnoyACPredFabV"/>
    <property type="match status" value="1"/>
</dbReference>
<dbReference type="NCBIfam" id="NF010177">
    <property type="entry name" value="PRK13656.1"/>
    <property type="match status" value="1"/>
</dbReference>
<dbReference type="PANTHER" id="PTHR37480">
    <property type="entry name" value="ENOYL-[ACYL-CARRIER-PROTEIN] REDUCTASE [NADH]"/>
    <property type="match status" value="1"/>
</dbReference>
<dbReference type="PANTHER" id="PTHR37480:SF1">
    <property type="entry name" value="ENOYL-[ACYL-CARRIER-PROTEIN] REDUCTASE [NADH]"/>
    <property type="match status" value="1"/>
</dbReference>
<dbReference type="Pfam" id="PF07055">
    <property type="entry name" value="Eno-Rase_FAD_bd"/>
    <property type="match status" value="1"/>
</dbReference>
<dbReference type="Pfam" id="PF12242">
    <property type="entry name" value="Eno-Rase_NADH_b"/>
    <property type="match status" value="1"/>
</dbReference>
<dbReference type="Pfam" id="PF12241">
    <property type="entry name" value="Enoyl_reductase"/>
    <property type="match status" value="1"/>
</dbReference>
<keyword id="KW-0275">Fatty acid biosynthesis</keyword>
<keyword id="KW-0276">Fatty acid metabolism</keyword>
<keyword id="KW-0444">Lipid biosynthesis</keyword>
<keyword id="KW-0443">Lipid metabolism</keyword>
<keyword id="KW-0520">NAD</keyword>
<keyword id="KW-0560">Oxidoreductase</keyword>
<organism>
    <name type="scientific">Burkholderia vietnamiensis (strain G4 / LMG 22486)</name>
    <name type="common">Burkholderia cepacia (strain R1808)</name>
    <dbReference type="NCBI Taxonomy" id="269482"/>
    <lineage>
        <taxon>Bacteria</taxon>
        <taxon>Pseudomonadati</taxon>
        <taxon>Pseudomonadota</taxon>
        <taxon>Betaproteobacteria</taxon>
        <taxon>Burkholderiales</taxon>
        <taxon>Burkholderiaceae</taxon>
        <taxon>Burkholderia</taxon>
        <taxon>Burkholderia cepacia complex</taxon>
    </lineage>
</organism>
<comment type="function">
    <text evidence="1">Involved in the final reduction of the elongation cycle of fatty acid synthesis (FAS II). Catalyzes the reduction of a carbon-carbon double bond in an enoyl moiety that is covalently linked to an acyl carrier protein (ACP).</text>
</comment>
<comment type="catalytic activity">
    <reaction evidence="1">
        <text>a 2,3-saturated acyl-[ACP] + NAD(+) = a (2E)-enoyl-[ACP] + NADH + H(+)</text>
        <dbReference type="Rhea" id="RHEA:10240"/>
        <dbReference type="Rhea" id="RHEA-COMP:9925"/>
        <dbReference type="Rhea" id="RHEA-COMP:9926"/>
        <dbReference type="ChEBI" id="CHEBI:15378"/>
        <dbReference type="ChEBI" id="CHEBI:57540"/>
        <dbReference type="ChEBI" id="CHEBI:57945"/>
        <dbReference type="ChEBI" id="CHEBI:78784"/>
        <dbReference type="ChEBI" id="CHEBI:78785"/>
        <dbReference type="EC" id="1.3.1.9"/>
    </reaction>
</comment>
<comment type="pathway">
    <text evidence="1">Lipid metabolism; fatty acid biosynthesis.</text>
</comment>
<comment type="subunit">
    <text evidence="1">Monomer.</text>
</comment>
<comment type="similarity">
    <text evidence="1">Belongs to the TER reductase family.</text>
</comment>
<proteinExistence type="inferred from homology"/>
<reference key="1">
    <citation type="submission" date="2007-03" db="EMBL/GenBank/DDBJ databases">
        <title>Complete sequence of chromosome 2 of Burkholderia vietnamiensis G4.</title>
        <authorList>
            <consortium name="US DOE Joint Genome Institute"/>
            <person name="Copeland A."/>
            <person name="Lucas S."/>
            <person name="Lapidus A."/>
            <person name="Barry K."/>
            <person name="Detter J.C."/>
            <person name="Glavina del Rio T."/>
            <person name="Hammon N."/>
            <person name="Israni S."/>
            <person name="Dalin E."/>
            <person name="Tice H."/>
            <person name="Pitluck S."/>
            <person name="Chain P."/>
            <person name="Malfatti S."/>
            <person name="Shin M."/>
            <person name="Vergez L."/>
            <person name="Schmutz J."/>
            <person name="Larimer F."/>
            <person name="Land M."/>
            <person name="Hauser L."/>
            <person name="Kyrpides N."/>
            <person name="Tiedje J."/>
            <person name="Richardson P."/>
        </authorList>
    </citation>
    <scope>NUCLEOTIDE SEQUENCE [LARGE SCALE GENOMIC DNA]</scope>
    <source>
        <strain>G4 / LMG 22486</strain>
    </source>
</reference>
<feature type="chain" id="PRO_1000070477" description="Enoyl-[acyl-carrier-protein] reductase [NADH]">
    <location>
        <begin position="1"/>
        <end position="400"/>
    </location>
</feature>
<feature type="active site" description="Proton donor" evidence="1">
    <location>
        <position position="235"/>
    </location>
</feature>
<feature type="binding site" evidence="1">
    <location>
        <begin position="48"/>
        <end position="53"/>
    </location>
    <ligand>
        <name>NAD(+)</name>
        <dbReference type="ChEBI" id="CHEBI:57540"/>
    </ligand>
</feature>
<feature type="binding site" evidence="1">
    <location>
        <begin position="74"/>
        <end position="75"/>
    </location>
    <ligand>
        <name>NAD(+)</name>
        <dbReference type="ChEBI" id="CHEBI:57540"/>
    </ligand>
</feature>
<feature type="binding site" evidence="1">
    <location>
        <begin position="111"/>
        <end position="112"/>
    </location>
    <ligand>
        <name>NAD(+)</name>
        <dbReference type="ChEBI" id="CHEBI:57540"/>
    </ligand>
</feature>
<feature type="binding site" evidence="1">
    <location>
        <begin position="139"/>
        <end position="140"/>
    </location>
    <ligand>
        <name>NAD(+)</name>
        <dbReference type="ChEBI" id="CHEBI:57540"/>
    </ligand>
</feature>
<feature type="binding site" evidence="1">
    <location>
        <position position="225"/>
    </location>
    <ligand>
        <name>substrate</name>
    </ligand>
</feature>
<feature type="binding site" evidence="1">
    <location>
        <position position="244"/>
    </location>
    <ligand>
        <name>NAD(+)</name>
        <dbReference type="ChEBI" id="CHEBI:57540"/>
    </ligand>
</feature>
<feature type="binding site" evidence="1">
    <location>
        <begin position="273"/>
        <end position="275"/>
    </location>
    <ligand>
        <name>NAD(+)</name>
        <dbReference type="ChEBI" id="CHEBI:57540"/>
    </ligand>
</feature>
<feature type="site" description="Plays an important role in discriminating NADH against NADPH" evidence="1">
    <location>
        <position position="75"/>
    </location>
</feature>
<gene>
    <name evidence="1" type="primary">fabV</name>
    <name type="ordered locus">Bcep1808_3641</name>
</gene>
<name>FABV_BURVG</name>